<keyword id="KW-0274">FAD</keyword>
<keyword id="KW-0285">Flavoprotein</keyword>
<keyword id="KW-0560">Oxidoreductase</keyword>
<keyword id="KW-1185">Reference proteome</keyword>
<protein>
    <recommendedName>
        <fullName>Probable acyl-CoA dehydrogenase fadE25</fullName>
        <ecNumber>1.3.99.-</ecNumber>
    </recommendedName>
</protein>
<proteinExistence type="inferred from homology"/>
<name>ACDP_MYCLE</name>
<sequence>MVGWSGNPLFDLFKLPEEHNELRATIRALAEKEIAPHAADVDQRARFPEEALAALNASGFNAIHVPEEYGGQGADSVAACIVIEEVARVDASASLIPAVNKLGTMGLILRGSEELKKQVLPSLAAEGAMASYALSEREAGSDAASMRTRAKADGDDWILNGFKCWITNGGKSTWYTVMAVTDPDKGANGISAFIVHKDDEGFSIGPKEKKLGIKGSPTTELYFDKCRIPGDRIIGEPGTGFKTALATLDHTRPTIGAQAVGIAQGALDAAIVYTKDRKQFGESISTFQSIQFMLADMAMKVEAARLIVYAAAARAERGEPDLGFISAASKCFASDIAMEVTTDAVQLFGGAGYTSDFPVERFMRDAKITQIYEGTNQIQRVVMSRALLR</sequence>
<dbReference type="EC" id="1.3.99.-"/>
<dbReference type="EMBL" id="U00012">
    <property type="protein sequence ID" value="AAA85936.1"/>
    <property type="molecule type" value="Genomic_DNA"/>
</dbReference>
<dbReference type="EMBL" id="AL583919">
    <property type="protein sequence ID" value="CAC30246.1"/>
    <property type="molecule type" value="Genomic_DNA"/>
</dbReference>
<dbReference type="PIR" id="B87001">
    <property type="entry name" value="B87001"/>
</dbReference>
<dbReference type="RefSeq" id="NP_301577.1">
    <property type="nucleotide sequence ID" value="NC_002677.1"/>
</dbReference>
<dbReference type="RefSeq" id="WP_010907901.1">
    <property type="nucleotide sequence ID" value="NC_002677.1"/>
</dbReference>
<dbReference type="SMR" id="P46703"/>
<dbReference type="STRING" id="272631.gene:17574561"/>
<dbReference type="KEGG" id="mle:ML0737"/>
<dbReference type="PATRIC" id="fig|272631.5.peg.1334"/>
<dbReference type="Leproma" id="ML0737"/>
<dbReference type="eggNOG" id="COG1960">
    <property type="taxonomic scope" value="Bacteria"/>
</dbReference>
<dbReference type="HOGENOM" id="CLU_018204_0_2_11"/>
<dbReference type="OrthoDB" id="8876745at2"/>
<dbReference type="Proteomes" id="UP000000806">
    <property type="component" value="Chromosome"/>
</dbReference>
<dbReference type="GO" id="GO:0003995">
    <property type="term" value="F:acyl-CoA dehydrogenase activity"/>
    <property type="evidence" value="ECO:0007669"/>
    <property type="project" value="InterPro"/>
</dbReference>
<dbReference type="GO" id="GO:0050660">
    <property type="term" value="F:flavin adenine dinucleotide binding"/>
    <property type="evidence" value="ECO:0007669"/>
    <property type="project" value="InterPro"/>
</dbReference>
<dbReference type="CDD" id="cd01158">
    <property type="entry name" value="SCAD_SBCAD"/>
    <property type="match status" value="1"/>
</dbReference>
<dbReference type="FunFam" id="1.10.540.10:FF:000023">
    <property type="entry name" value="Acyl-CoA dehydrogenase FadE25"/>
    <property type="match status" value="1"/>
</dbReference>
<dbReference type="FunFam" id="1.20.140.10:FF:000004">
    <property type="entry name" value="Acyl-CoA dehydrogenase FadE25"/>
    <property type="match status" value="1"/>
</dbReference>
<dbReference type="FunFam" id="2.40.110.10:FF:000001">
    <property type="entry name" value="Acyl-CoA dehydrogenase, mitochondrial"/>
    <property type="match status" value="1"/>
</dbReference>
<dbReference type="Gene3D" id="1.10.540.10">
    <property type="entry name" value="Acyl-CoA dehydrogenase/oxidase, N-terminal domain"/>
    <property type="match status" value="1"/>
</dbReference>
<dbReference type="Gene3D" id="2.40.110.10">
    <property type="entry name" value="Butyryl-CoA Dehydrogenase, subunit A, domain 2"/>
    <property type="match status" value="1"/>
</dbReference>
<dbReference type="Gene3D" id="1.20.140.10">
    <property type="entry name" value="Butyryl-CoA Dehydrogenase, subunit A, domain 3"/>
    <property type="match status" value="1"/>
</dbReference>
<dbReference type="InterPro" id="IPR006089">
    <property type="entry name" value="Acyl-CoA_DH_CS"/>
</dbReference>
<dbReference type="InterPro" id="IPR006091">
    <property type="entry name" value="Acyl-CoA_Oxase/DH_mid-dom"/>
</dbReference>
<dbReference type="InterPro" id="IPR046373">
    <property type="entry name" value="Acyl-CoA_Oxase/DH_mid-dom_sf"/>
</dbReference>
<dbReference type="InterPro" id="IPR036250">
    <property type="entry name" value="AcylCo_DH-like_C"/>
</dbReference>
<dbReference type="InterPro" id="IPR009075">
    <property type="entry name" value="AcylCo_DH/oxidase_C"/>
</dbReference>
<dbReference type="InterPro" id="IPR013786">
    <property type="entry name" value="AcylCoA_DH/ox_N"/>
</dbReference>
<dbReference type="InterPro" id="IPR037069">
    <property type="entry name" value="AcylCoA_DH/ox_N_sf"/>
</dbReference>
<dbReference type="InterPro" id="IPR009100">
    <property type="entry name" value="AcylCoA_DH/oxidase_NM_dom_sf"/>
</dbReference>
<dbReference type="PANTHER" id="PTHR43884">
    <property type="entry name" value="ACYL-COA DEHYDROGENASE"/>
    <property type="match status" value="1"/>
</dbReference>
<dbReference type="PANTHER" id="PTHR43884:SF12">
    <property type="entry name" value="ISOVALERYL-COA DEHYDROGENASE, MITOCHONDRIAL-RELATED"/>
    <property type="match status" value="1"/>
</dbReference>
<dbReference type="Pfam" id="PF00441">
    <property type="entry name" value="Acyl-CoA_dh_1"/>
    <property type="match status" value="1"/>
</dbReference>
<dbReference type="Pfam" id="PF02770">
    <property type="entry name" value="Acyl-CoA_dh_M"/>
    <property type="match status" value="1"/>
</dbReference>
<dbReference type="Pfam" id="PF02771">
    <property type="entry name" value="Acyl-CoA_dh_N"/>
    <property type="match status" value="1"/>
</dbReference>
<dbReference type="PIRSF" id="PIRSF016578">
    <property type="entry name" value="HsaA"/>
    <property type="match status" value="1"/>
</dbReference>
<dbReference type="SUPFAM" id="SSF47203">
    <property type="entry name" value="Acyl-CoA dehydrogenase C-terminal domain-like"/>
    <property type="match status" value="1"/>
</dbReference>
<dbReference type="SUPFAM" id="SSF56645">
    <property type="entry name" value="Acyl-CoA dehydrogenase NM domain-like"/>
    <property type="match status" value="1"/>
</dbReference>
<dbReference type="PROSITE" id="PS00072">
    <property type="entry name" value="ACYL_COA_DH_1"/>
    <property type="match status" value="1"/>
</dbReference>
<dbReference type="PROSITE" id="PS00073">
    <property type="entry name" value="ACYL_COA_DH_2"/>
    <property type="match status" value="1"/>
</dbReference>
<feature type="chain" id="PRO_0000201187" description="Probable acyl-CoA dehydrogenase fadE25">
    <location>
        <begin position="1"/>
        <end position="389"/>
    </location>
</feature>
<gene>
    <name type="primary">fadE25</name>
    <name type="synonym">acd</name>
    <name type="ordered locus">ML0737</name>
    <name type="ORF">B1308_F1_34</name>
</gene>
<evidence type="ECO:0000250" key="1"/>
<evidence type="ECO:0000305" key="2"/>
<accession>P46703</accession>
<comment type="catalytic activity">
    <reaction>
        <text>a 2,3-saturated acyl-CoA + A = a 2,3-dehydroacyl-CoA + AH2</text>
        <dbReference type="Rhea" id="RHEA:48608"/>
        <dbReference type="ChEBI" id="CHEBI:13193"/>
        <dbReference type="ChEBI" id="CHEBI:17499"/>
        <dbReference type="ChEBI" id="CHEBI:60015"/>
        <dbReference type="ChEBI" id="CHEBI:65111"/>
    </reaction>
</comment>
<comment type="cofactor">
    <cofactor evidence="1">
        <name>FAD</name>
        <dbReference type="ChEBI" id="CHEBI:57692"/>
    </cofactor>
</comment>
<comment type="similarity">
    <text evidence="2">Belongs to the acyl-CoA dehydrogenase family.</text>
</comment>
<reference key="1">
    <citation type="journal article" date="1995" name="Gene">
        <title>Genomic organization of the mycobacterial sigma gene cluster.</title>
        <authorList>
            <person name="Doukhan L."/>
            <person name="Predich M."/>
            <person name="Nair G."/>
            <person name="Dussurget O."/>
            <person name="Mandic-Mulec I."/>
            <person name="Cole S.T."/>
            <person name="Smith D.R."/>
            <person name="Smith I."/>
        </authorList>
    </citation>
    <scope>NUCLEOTIDE SEQUENCE [GENOMIC DNA]</scope>
</reference>
<reference key="2">
    <citation type="journal article" date="2001" name="Nature">
        <title>Massive gene decay in the leprosy bacillus.</title>
        <authorList>
            <person name="Cole S.T."/>
            <person name="Eiglmeier K."/>
            <person name="Parkhill J."/>
            <person name="James K.D."/>
            <person name="Thomson N.R."/>
            <person name="Wheeler P.R."/>
            <person name="Honore N."/>
            <person name="Garnier T."/>
            <person name="Churcher C.M."/>
            <person name="Harris D.E."/>
            <person name="Mungall K.L."/>
            <person name="Basham D."/>
            <person name="Brown D."/>
            <person name="Chillingworth T."/>
            <person name="Connor R."/>
            <person name="Davies R.M."/>
            <person name="Devlin K."/>
            <person name="Duthoy S."/>
            <person name="Feltwell T."/>
            <person name="Fraser A."/>
            <person name="Hamlin N."/>
            <person name="Holroyd S."/>
            <person name="Hornsby T."/>
            <person name="Jagels K."/>
            <person name="Lacroix C."/>
            <person name="Maclean J."/>
            <person name="Moule S."/>
            <person name="Murphy L.D."/>
            <person name="Oliver K."/>
            <person name="Quail M.A."/>
            <person name="Rajandream M.A."/>
            <person name="Rutherford K.M."/>
            <person name="Rutter S."/>
            <person name="Seeger K."/>
            <person name="Simon S."/>
            <person name="Simmonds M."/>
            <person name="Skelton J."/>
            <person name="Squares R."/>
            <person name="Squares S."/>
            <person name="Stevens K."/>
            <person name="Taylor K."/>
            <person name="Whitehead S."/>
            <person name="Woodward J.R."/>
            <person name="Barrell B.G."/>
        </authorList>
    </citation>
    <scope>NUCLEOTIDE SEQUENCE [LARGE SCALE GENOMIC DNA]</scope>
    <source>
        <strain>TN</strain>
    </source>
</reference>
<organism>
    <name type="scientific">Mycobacterium leprae (strain TN)</name>
    <dbReference type="NCBI Taxonomy" id="272631"/>
    <lineage>
        <taxon>Bacteria</taxon>
        <taxon>Bacillati</taxon>
        <taxon>Actinomycetota</taxon>
        <taxon>Actinomycetes</taxon>
        <taxon>Mycobacteriales</taxon>
        <taxon>Mycobacteriaceae</taxon>
        <taxon>Mycobacterium</taxon>
    </lineage>
</organism>